<accession>Q7ZAK5</accession>
<reference key="1">
    <citation type="journal article" date="2001" name="J. Bacteriol.">
        <title>Genome of the bacterium Streptococcus pneumoniae strain R6.</title>
        <authorList>
            <person name="Hoskins J."/>
            <person name="Alborn W.E. Jr."/>
            <person name="Arnold J."/>
            <person name="Blaszczak L.C."/>
            <person name="Burgett S."/>
            <person name="DeHoff B.S."/>
            <person name="Estrem S.T."/>
            <person name="Fritz L."/>
            <person name="Fu D.-J."/>
            <person name="Fuller W."/>
            <person name="Geringer C."/>
            <person name="Gilmour R."/>
            <person name="Glass J.S."/>
            <person name="Khoja H."/>
            <person name="Kraft A.R."/>
            <person name="Lagace R.E."/>
            <person name="LeBlanc D.J."/>
            <person name="Lee L.N."/>
            <person name="Lefkowitz E.J."/>
            <person name="Lu J."/>
            <person name="Matsushima P."/>
            <person name="McAhren S.M."/>
            <person name="McHenney M."/>
            <person name="McLeaster K."/>
            <person name="Mundy C.W."/>
            <person name="Nicas T.I."/>
            <person name="Norris F.H."/>
            <person name="O'Gara M."/>
            <person name="Peery R.B."/>
            <person name="Robertson G.T."/>
            <person name="Rockey P."/>
            <person name="Sun P.-M."/>
            <person name="Winkler M.E."/>
            <person name="Yang Y."/>
            <person name="Young-Bellido M."/>
            <person name="Zhao G."/>
            <person name="Zook C.A."/>
            <person name="Baltz R.H."/>
            <person name="Jaskunas S.R."/>
            <person name="Rosteck P.R. Jr."/>
            <person name="Skatrud P.L."/>
            <person name="Glass J.I."/>
        </authorList>
    </citation>
    <scope>NUCLEOTIDE SEQUENCE [LARGE SCALE GENOMIC DNA]</scope>
    <source>
        <strain>ATCC BAA-255 / R6</strain>
    </source>
</reference>
<reference key="2">
    <citation type="journal article" date="1977" name="FEMS Microbiol. Lett.">
        <title>Cellular location of pneumolysin.</title>
        <authorList>
            <person name="Johnson M.K."/>
        </authorList>
    </citation>
    <scope>SUBCELLULAR LOCATION</scope>
    <source>
        <strain>ATCC BAA-255 / R6</strain>
    </source>
</reference>
<dbReference type="EMBL" id="AE007317">
    <property type="protein sequence ID" value="AAL00542.1"/>
    <property type="molecule type" value="Genomic_DNA"/>
</dbReference>
<dbReference type="PIR" id="F95224">
    <property type="entry name" value="F95224"/>
</dbReference>
<dbReference type="RefSeq" id="NP_359331.1">
    <property type="nucleotide sequence ID" value="NC_003098.1"/>
</dbReference>
<dbReference type="RefSeq" id="WP_001284359.1">
    <property type="nucleotide sequence ID" value="NC_003098.1"/>
</dbReference>
<dbReference type="SMR" id="Q7ZAK5"/>
<dbReference type="STRING" id="171101.spr1739"/>
<dbReference type="ABCD" id="Q7ZAK5">
    <property type="antibodies" value="5 sequenced antibodies"/>
</dbReference>
<dbReference type="KEGG" id="spr:spr1739"/>
<dbReference type="PATRIC" id="fig|171101.6.peg.1883"/>
<dbReference type="eggNOG" id="ENOG502Z7ST">
    <property type="taxonomic scope" value="Bacteria"/>
</dbReference>
<dbReference type="HOGENOM" id="CLU_026912_1_0_9"/>
<dbReference type="Proteomes" id="UP000000586">
    <property type="component" value="Chromosome"/>
</dbReference>
<dbReference type="GO" id="GO:0005737">
    <property type="term" value="C:cytoplasm"/>
    <property type="evidence" value="ECO:0007669"/>
    <property type="project" value="UniProtKB-SubCell"/>
</dbReference>
<dbReference type="GO" id="GO:0005576">
    <property type="term" value="C:extracellular region"/>
    <property type="evidence" value="ECO:0007669"/>
    <property type="project" value="UniProtKB-SubCell"/>
</dbReference>
<dbReference type="GO" id="GO:0020002">
    <property type="term" value="C:host cell plasma membrane"/>
    <property type="evidence" value="ECO:0007669"/>
    <property type="project" value="UniProtKB-SubCell"/>
</dbReference>
<dbReference type="GO" id="GO:0016020">
    <property type="term" value="C:membrane"/>
    <property type="evidence" value="ECO:0007669"/>
    <property type="project" value="UniProtKB-KW"/>
</dbReference>
<dbReference type="GO" id="GO:0015485">
    <property type="term" value="F:cholesterol binding"/>
    <property type="evidence" value="ECO:0007669"/>
    <property type="project" value="InterPro"/>
</dbReference>
<dbReference type="GO" id="GO:0090729">
    <property type="term" value="F:toxin activity"/>
    <property type="evidence" value="ECO:0007669"/>
    <property type="project" value="UniProtKB-KW"/>
</dbReference>
<dbReference type="GO" id="GO:0031640">
    <property type="term" value="P:killing of cells of another organism"/>
    <property type="evidence" value="ECO:0007669"/>
    <property type="project" value="UniProtKB-KW"/>
</dbReference>
<dbReference type="FunFam" id="2.60.40.1430:FF:000001">
    <property type="entry name" value="Thiol-activated cytolysin"/>
    <property type="match status" value="1"/>
</dbReference>
<dbReference type="Gene3D" id="3.30.1040.20">
    <property type="match status" value="1"/>
</dbReference>
<dbReference type="Gene3D" id="3.40.30.40">
    <property type="entry name" value="Perfringolysin"/>
    <property type="match status" value="1"/>
</dbReference>
<dbReference type="Gene3D" id="2.60.40.1430">
    <property type="entry name" value="Perfringolysin, domain 4"/>
    <property type="match status" value="1"/>
</dbReference>
<dbReference type="Gene3D" id="3.90.840.10">
    <property type="entry name" value="Thiol-activated cytolysin superfamily/Thiol-activated cytolysin, alpha-beta domain"/>
    <property type="match status" value="1"/>
</dbReference>
<dbReference type="InterPro" id="IPR035390">
    <property type="entry name" value="Thiol_cytolys_C"/>
</dbReference>
<dbReference type="InterPro" id="IPR038700">
    <property type="entry name" value="Thiol_cytolys_C_sf"/>
</dbReference>
<dbReference type="InterPro" id="IPR001869">
    <property type="entry name" value="Thiol_cytolysin"/>
</dbReference>
<dbReference type="InterPro" id="IPR036363">
    <property type="entry name" value="Thiol_cytolysin_ab_sf"/>
</dbReference>
<dbReference type="InterPro" id="IPR036359">
    <property type="entry name" value="Thiol_cytolysin_sf"/>
</dbReference>
<dbReference type="Pfam" id="PF17440">
    <property type="entry name" value="Thiol_cytolys_C"/>
    <property type="match status" value="1"/>
</dbReference>
<dbReference type="Pfam" id="PF01289">
    <property type="entry name" value="Thiol_cytolysin"/>
    <property type="match status" value="1"/>
</dbReference>
<dbReference type="PRINTS" id="PR01400">
    <property type="entry name" value="TACYTOLYSIN"/>
</dbReference>
<dbReference type="SUPFAM" id="SSF56978">
    <property type="entry name" value="Perfringolysin"/>
    <property type="match status" value="1"/>
</dbReference>
<dbReference type="PROSITE" id="PS00481">
    <property type="entry name" value="THIOL_CYTOLYSINS"/>
    <property type="match status" value="1"/>
</dbReference>
<evidence type="ECO:0000250" key="1"/>
<evidence type="ECO:0000250" key="2">
    <source>
        <dbReference type="UniProtKB" id="P0C2E9"/>
    </source>
</evidence>
<evidence type="ECO:0000250" key="3">
    <source>
        <dbReference type="UniProtKB" id="P0C2J9"/>
    </source>
</evidence>
<evidence type="ECO:0000250" key="4">
    <source>
        <dbReference type="UniProtKB" id="P13128"/>
    </source>
</evidence>
<evidence type="ECO:0000250" key="5">
    <source>
        <dbReference type="UniProtKB" id="Q04IN8"/>
    </source>
</evidence>
<evidence type="ECO:0000269" key="6">
    <source ref="2"/>
</evidence>
<evidence type="ECO:0000305" key="7"/>
<sequence>MANKAVNDFILAMNYDKKKLLTHQGESIENRFIKEGNQLPDEFVVIERKKRSLSTNTSDISVTATNDSRLYPGALLVVDETLLENNPTLLAVDRAPMTYSIDLPGLASSDSFLQVEDPSNSSVRGAVNDLLAKWHQDYGQVNNVPARMQYEKITAHSMEQLKVKFGSDFEKTGNSLDIDFNSVHSGEKQIQIVNFKQIYYTVSVDAVKNPGDVFQDTVTVEDLKQRGISAERPLVYISSVAYGRQVYLKLETTSKSDEVEAAFEALIKGVKVAPQTEWKQILDNTEVKAVILGGDPSSGARVVTGKVDMVEDLIQEGSRFTADHPGLPISYTTSFLRDNVVATFQNSTDYVETKVTAYRNGDLLLDHSGAYVAQYYITWDELSYDHQGKEVLTPKAWDRNGQDLTAHFTTSIPLKGNVRNLSVKIRECTGLAWEWWRTVYEKTDLPLVRKRTISIWGTTLYPQVEDKVEND</sequence>
<comment type="function">
    <text evidence="4">A cholesterol-dependent toxin that causes cytolysis by forming pores in cholesterol containing host membranes. After binding to target membranes, the protein undergoes a major conformation change, leading to its insertion in the host membrane and formation of an oligomeric pore complex. Cholesterol is required for binding to host membranes, membrane insertion and pore formation; cholesterol binding is mediated by a Thr-Leu pair in the C-terminus. Can be reversibly inactivated by oxidation.</text>
</comment>
<comment type="subunit">
    <text evidence="5">Homooligomeric pore complex of 35 to 50 subunits; when inserted in the host membrane.</text>
</comment>
<comment type="subcellular location">
    <subcellularLocation>
        <location evidence="6">Cytoplasm</location>
    </subcellularLocation>
    <subcellularLocation>
        <location evidence="3">Secreted</location>
    </subcellularLocation>
    <subcellularLocation>
        <location evidence="4">Host cell membrane</location>
        <topology evidence="5">Multi-pass membrane protein</topology>
    </subcellularLocation>
    <text evidence="3 5">Probably secreted as soluble protein by the accessory Sec system (By similarity). It then inserts into the host cell membrane and forms pores formed by transmembrane beta-strands (By similarity).</text>
</comment>
<comment type="similarity">
    <text evidence="7">Belongs to the cholesterol-dependent cytolysin family.</text>
</comment>
<gene>
    <name type="primary">ply</name>
    <name type="ordered locus">spr1739</name>
</gene>
<proteinExistence type="inferred from homology"/>
<name>TACY_STRR6</name>
<keyword id="KW-0204">Cytolysis</keyword>
<keyword id="KW-0963">Cytoplasm</keyword>
<keyword id="KW-0354">Hemolysis</keyword>
<keyword id="KW-1032">Host cell membrane</keyword>
<keyword id="KW-1043">Host membrane</keyword>
<keyword id="KW-0446">Lipid-binding</keyword>
<keyword id="KW-0472">Membrane</keyword>
<keyword id="KW-1185">Reference proteome</keyword>
<keyword id="KW-0964">Secreted</keyword>
<keyword id="KW-0800">Toxin</keyword>
<keyword id="KW-0812">Transmembrane</keyword>
<keyword id="KW-1134">Transmembrane beta strand</keyword>
<keyword id="KW-0843">Virulence</keyword>
<protein>
    <recommendedName>
        <fullName>Pneumolysin</fullName>
        <shortName>PLY</shortName>
    </recommendedName>
    <alternativeName>
        <fullName>Thiol-activated cytolysin</fullName>
    </alternativeName>
</protein>
<organism>
    <name type="scientific">Streptococcus pneumoniae (strain ATCC BAA-255 / R6)</name>
    <dbReference type="NCBI Taxonomy" id="171101"/>
    <lineage>
        <taxon>Bacteria</taxon>
        <taxon>Bacillati</taxon>
        <taxon>Bacillota</taxon>
        <taxon>Bacilli</taxon>
        <taxon>Lactobacillales</taxon>
        <taxon>Streptococcaceae</taxon>
        <taxon>Streptococcus</taxon>
    </lineage>
</organism>
<feature type="initiator methionine" description="Removed" evidence="1">
    <location>
        <position position="1"/>
    </location>
</feature>
<feature type="chain" id="PRO_0000279547" description="Pneumolysin">
    <location>
        <begin position="2"/>
        <end position="471"/>
    </location>
</feature>
<feature type="transmembrane region" description="Beta stranded" evidence="5">
    <location>
        <begin position="158"/>
        <end position="171"/>
    </location>
</feature>
<feature type="transmembrane region" description="Beta stranded" evidence="5">
    <location>
        <begin position="178"/>
        <end position="187"/>
    </location>
</feature>
<feature type="transmembrane region" description="Beta stranded" evidence="5">
    <location>
        <begin position="256"/>
        <end position="265"/>
    </location>
</feature>
<feature type="transmembrane region" description="Beta stranded" evidence="5">
    <location>
        <begin position="273"/>
        <end position="285"/>
    </location>
</feature>
<feature type="short sequence motif" description="Conserved undecapeptide" evidence="7">
    <location>
        <begin position="427"/>
        <end position="437"/>
    </location>
</feature>
<feature type="short sequence motif" description="Cholesterol binding" evidence="2">
    <location>
        <begin position="459"/>
        <end position="460"/>
    </location>
</feature>